<evidence type="ECO:0000255" key="1">
    <source>
        <dbReference type="HAMAP-Rule" id="MF_01325"/>
    </source>
</evidence>
<evidence type="ECO:0000256" key="2">
    <source>
        <dbReference type="SAM" id="MobiDB-lite"/>
    </source>
</evidence>
<evidence type="ECO:0000305" key="3"/>
<sequence>MTKGILGKKVGMTQVFTDNGELVPVTVIDVTPNVVMQIKTVENDGYSAVQLGFDDKREVLSNKPEQGHAAKANTTPKRFIGEIRDAELGDIKVGDEVKADVFAEGETVDVTGTTKGHGYQGNIHKDNQSRGPMAHGSRYHRRPGSLGAIINRVFKGMKLPGRMGGKTVTMQHLQVVKVDLDNNVLLIKGNVPGANKSYVTIKNSVKANTKKSLSKQHNK</sequence>
<proteinExistence type="inferred from homology"/>
<accession>B2G8X8</accession>
<name>RL3_LIMRJ</name>
<protein>
    <recommendedName>
        <fullName evidence="1">Large ribosomal subunit protein uL3</fullName>
    </recommendedName>
    <alternativeName>
        <fullName evidence="3">50S ribosomal protein L3</fullName>
    </alternativeName>
</protein>
<comment type="function">
    <text evidence="1">One of the primary rRNA binding proteins, it binds directly near the 3'-end of the 23S rRNA, where it nucleates assembly of the 50S subunit.</text>
</comment>
<comment type="subunit">
    <text evidence="1">Part of the 50S ribosomal subunit. Forms a cluster with proteins L14 and L19.</text>
</comment>
<comment type="similarity">
    <text evidence="1">Belongs to the universal ribosomal protein uL3 family.</text>
</comment>
<keyword id="KW-0687">Ribonucleoprotein</keyword>
<keyword id="KW-0689">Ribosomal protein</keyword>
<keyword id="KW-0694">RNA-binding</keyword>
<keyword id="KW-0699">rRNA-binding</keyword>
<dbReference type="EMBL" id="AP007281">
    <property type="protein sequence ID" value="BAG25910.1"/>
    <property type="molecule type" value="Genomic_DNA"/>
</dbReference>
<dbReference type="RefSeq" id="WP_003664567.1">
    <property type="nucleotide sequence ID" value="NC_010609.1"/>
</dbReference>
<dbReference type="SMR" id="B2G8X8"/>
<dbReference type="GeneID" id="77191479"/>
<dbReference type="KEGG" id="lrf:LAR_1394"/>
<dbReference type="HOGENOM" id="CLU_044142_4_1_9"/>
<dbReference type="GO" id="GO:0022625">
    <property type="term" value="C:cytosolic large ribosomal subunit"/>
    <property type="evidence" value="ECO:0007669"/>
    <property type="project" value="TreeGrafter"/>
</dbReference>
<dbReference type="GO" id="GO:0019843">
    <property type="term" value="F:rRNA binding"/>
    <property type="evidence" value="ECO:0007669"/>
    <property type="project" value="UniProtKB-UniRule"/>
</dbReference>
<dbReference type="GO" id="GO:0003735">
    <property type="term" value="F:structural constituent of ribosome"/>
    <property type="evidence" value="ECO:0007669"/>
    <property type="project" value="InterPro"/>
</dbReference>
<dbReference type="GO" id="GO:0006412">
    <property type="term" value="P:translation"/>
    <property type="evidence" value="ECO:0007669"/>
    <property type="project" value="UniProtKB-UniRule"/>
</dbReference>
<dbReference type="FunFam" id="2.40.30.10:FF:000004">
    <property type="entry name" value="50S ribosomal protein L3"/>
    <property type="match status" value="1"/>
</dbReference>
<dbReference type="FunFam" id="3.30.160.810:FF:000002">
    <property type="entry name" value="50S ribosomal protein L3"/>
    <property type="match status" value="1"/>
</dbReference>
<dbReference type="Gene3D" id="3.30.160.810">
    <property type="match status" value="1"/>
</dbReference>
<dbReference type="Gene3D" id="2.40.30.10">
    <property type="entry name" value="Translation factors"/>
    <property type="match status" value="1"/>
</dbReference>
<dbReference type="HAMAP" id="MF_01325_B">
    <property type="entry name" value="Ribosomal_uL3_B"/>
    <property type="match status" value="1"/>
</dbReference>
<dbReference type="InterPro" id="IPR000597">
    <property type="entry name" value="Ribosomal_uL3"/>
</dbReference>
<dbReference type="InterPro" id="IPR019927">
    <property type="entry name" value="Ribosomal_uL3_bac/org-type"/>
</dbReference>
<dbReference type="InterPro" id="IPR009000">
    <property type="entry name" value="Transl_B-barrel_sf"/>
</dbReference>
<dbReference type="NCBIfam" id="TIGR03625">
    <property type="entry name" value="L3_bact"/>
    <property type="match status" value="1"/>
</dbReference>
<dbReference type="PANTHER" id="PTHR11229">
    <property type="entry name" value="50S RIBOSOMAL PROTEIN L3"/>
    <property type="match status" value="1"/>
</dbReference>
<dbReference type="PANTHER" id="PTHR11229:SF16">
    <property type="entry name" value="LARGE RIBOSOMAL SUBUNIT PROTEIN UL3C"/>
    <property type="match status" value="1"/>
</dbReference>
<dbReference type="Pfam" id="PF00297">
    <property type="entry name" value="Ribosomal_L3"/>
    <property type="match status" value="1"/>
</dbReference>
<dbReference type="SUPFAM" id="SSF50447">
    <property type="entry name" value="Translation proteins"/>
    <property type="match status" value="1"/>
</dbReference>
<gene>
    <name evidence="1" type="primary">rplC</name>
    <name type="ordered locus">LAR_1394</name>
</gene>
<feature type="chain" id="PRO_1000141880" description="Large ribosomal subunit protein uL3">
    <location>
        <begin position="1"/>
        <end position="219"/>
    </location>
</feature>
<feature type="region of interest" description="Disordered" evidence="2">
    <location>
        <begin position="113"/>
        <end position="142"/>
    </location>
</feature>
<reference key="1">
    <citation type="journal article" date="2008" name="DNA Res.">
        <title>Comparative genome analysis of Lactobacillus reuteri and Lactobacillus fermentum reveal a genomic island for reuterin and cobalamin production.</title>
        <authorList>
            <person name="Morita H."/>
            <person name="Toh H."/>
            <person name="Fukuda S."/>
            <person name="Horikawa H."/>
            <person name="Oshima K."/>
            <person name="Suzuki T."/>
            <person name="Murakami M."/>
            <person name="Hisamatsu S."/>
            <person name="Kato Y."/>
            <person name="Takizawa T."/>
            <person name="Fukuoka H."/>
            <person name="Yoshimura T."/>
            <person name="Itoh K."/>
            <person name="O'Sullivan D.J."/>
            <person name="McKay L.L."/>
            <person name="Ohno H."/>
            <person name="Kikuchi J."/>
            <person name="Masaoka T."/>
            <person name="Hattori M."/>
        </authorList>
    </citation>
    <scope>NUCLEOTIDE SEQUENCE [LARGE SCALE GENOMIC DNA]</scope>
    <source>
        <strain>JCM 1112</strain>
    </source>
</reference>
<organism>
    <name type="scientific">Limosilactobacillus reuteri subsp. reuteri (strain JCM 1112)</name>
    <name type="common">Lactobacillus reuteri</name>
    <dbReference type="NCBI Taxonomy" id="557433"/>
    <lineage>
        <taxon>Bacteria</taxon>
        <taxon>Bacillati</taxon>
        <taxon>Bacillota</taxon>
        <taxon>Bacilli</taxon>
        <taxon>Lactobacillales</taxon>
        <taxon>Lactobacillaceae</taxon>
        <taxon>Limosilactobacillus</taxon>
    </lineage>
</organism>